<comment type="function">
    <text evidence="1">Joins adenosylcobinamide-GDP and alpha-ribazole to generate adenosylcobalamin (Ado-cobalamin). Also synthesizes adenosylcobalamin 5'-phosphate from adenosylcobinamide-GDP and alpha-ribazole 5'-phosphate.</text>
</comment>
<comment type="catalytic activity">
    <reaction evidence="1">
        <text>alpha-ribazole + adenosylcob(III)inamide-GDP = adenosylcob(III)alamin + GMP + H(+)</text>
        <dbReference type="Rhea" id="RHEA:16049"/>
        <dbReference type="ChEBI" id="CHEBI:10329"/>
        <dbReference type="ChEBI" id="CHEBI:15378"/>
        <dbReference type="ChEBI" id="CHEBI:18408"/>
        <dbReference type="ChEBI" id="CHEBI:58115"/>
        <dbReference type="ChEBI" id="CHEBI:60487"/>
        <dbReference type="EC" id="2.7.8.26"/>
    </reaction>
</comment>
<comment type="catalytic activity">
    <reaction evidence="1">
        <text>alpha-ribazole 5'-phosphate + adenosylcob(III)inamide-GDP = adenosylcob(III)alamin 5'-phosphate + GMP + H(+)</text>
        <dbReference type="Rhea" id="RHEA:23560"/>
        <dbReference type="ChEBI" id="CHEBI:15378"/>
        <dbReference type="ChEBI" id="CHEBI:57918"/>
        <dbReference type="ChEBI" id="CHEBI:58115"/>
        <dbReference type="ChEBI" id="CHEBI:60487"/>
        <dbReference type="ChEBI" id="CHEBI:60493"/>
        <dbReference type="EC" id="2.7.8.26"/>
    </reaction>
</comment>
<comment type="cofactor">
    <cofactor evidence="1">
        <name>Mg(2+)</name>
        <dbReference type="ChEBI" id="CHEBI:18420"/>
    </cofactor>
</comment>
<comment type="pathway">
    <text evidence="1">Cofactor biosynthesis; adenosylcobalamin biosynthesis; adenosylcobalamin from cob(II)yrinate a,c-diamide: step 7/7.</text>
</comment>
<comment type="subcellular location">
    <subcellularLocation>
        <location evidence="1">Cell inner membrane</location>
        <topology evidence="1">Multi-pass membrane protein</topology>
    </subcellularLocation>
</comment>
<comment type="similarity">
    <text evidence="1">Belongs to the CobS family.</text>
</comment>
<dbReference type="EC" id="2.7.8.26" evidence="1"/>
<dbReference type="EMBL" id="CP001068">
    <property type="protein sequence ID" value="ACD27788.1"/>
    <property type="molecule type" value="Genomic_DNA"/>
</dbReference>
<dbReference type="SMR" id="B2UAJ1"/>
<dbReference type="STRING" id="402626.Rpic_2662"/>
<dbReference type="KEGG" id="rpi:Rpic_2662"/>
<dbReference type="eggNOG" id="COG0368">
    <property type="taxonomic scope" value="Bacteria"/>
</dbReference>
<dbReference type="HOGENOM" id="CLU_057426_1_1_4"/>
<dbReference type="UniPathway" id="UPA00148">
    <property type="reaction ID" value="UER00238"/>
</dbReference>
<dbReference type="GO" id="GO:0005886">
    <property type="term" value="C:plasma membrane"/>
    <property type="evidence" value="ECO:0007669"/>
    <property type="project" value="UniProtKB-SubCell"/>
</dbReference>
<dbReference type="GO" id="GO:0051073">
    <property type="term" value="F:adenosylcobinamide-GDP ribazoletransferase activity"/>
    <property type="evidence" value="ECO:0007669"/>
    <property type="project" value="UniProtKB-UniRule"/>
</dbReference>
<dbReference type="GO" id="GO:0008818">
    <property type="term" value="F:cobalamin 5'-phosphate synthase activity"/>
    <property type="evidence" value="ECO:0007669"/>
    <property type="project" value="UniProtKB-UniRule"/>
</dbReference>
<dbReference type="GO" id="GO:0009236">
    <property type="term" value="P:cobalamin biosynthetic process"/>
    <property type="evidence" value="ECO:0007669"/>
    <property type="project" value="UniProtKB-UniRule"/>
</dbReference>
<dbReference type="HAMAP" id="MF_00719">
    <property type="entry name" value="CobS"/>
    <property type="match status" value="1"/>
</dbReference>
<dbReference type="InterPro" id="IPR003805">
    <property type="entry name" value="CobS"/>
</dbReference>
<dbReference type="NCBIfam" id="TIGR00317">
    <property type="entry name" value="cobS"/>
    <property type="match status" value="1"/>
</dbReference>
<dbReference type="NCBIfam" id="NF001277">
    <property type="entry name" value="PRK00235.1-3"/>
    <property type="match status" value="1"/>
</dbReference>
<dbReference type="PANTHER" id="PTHR34148">
    <property type="entry name" value="ADENOSYLCOBINAMIDE-GDP RIBAZOLETRANSFERASE"/>
    <property type="match status" value="1"/>
</dbReference>
<dbReference type="PANTHER" id="PTHR34148:SF1">
    <property type="entry name" value="ADENOSYLCOBINAMIDE-GDP RIBAZOLETRANSFERASE"/>
    <property type="match status" value="1"/>
</dbReference>
<dbReference type="Pfam" id="PF02654">
    <property type="entry name" value="CobS"/>
    <property type="match status" value="1"/>
</dbReference>
<accession>B2UAJ1</accession>
<sequence length="256" mass="27542">MNALREHWQALWTAVGYFTRIPVPASVGFSQAGLNRAARYFPLIGWLVGAVAAAVYWLVLRTVPAQGVAVAVSMGATLLLTGAFHEDGLADCADGFGGGYTPEDRLRIMHDSRIGAFGAIAVCMALLLKWQLLSAMAPHSIGILVAMVAAHAASRAAAVSHLLTHDYVRAEGKAKPVAQRMRWSDALWAGVFGVVPLLWFGPMCAALIVVGLILARWLLGRYFVRRIGGITGDCLGMAQQIFELLILWGLLAWMSS</sequence>
<feature type="chain" id="PRO_1000148030" description="Adenosylcobinamide-GDP ribazoletransferase">
    <location>
        <begin position="1"/>
        <end position="256"/>
    </location>
</feature>
<feature type="transmembrane region" description="Helical" evidence="1">
    <location>
        <begin position="40"/>
        <end position="60"/>
    </location>
</feature>
<feature type="transmembrane region" description="Helical" evidence="1">
    <location>
        <begin position="64"/>
        <end position="84"/>
    </location>
</feature>
<feature type="transmembrane region" description="Helical" evidence="1">
    <location>
        <begin position="114"/>
        <end position="134"/>
    </location>
</feature>
<feature type="transmembrane region" description="Helical" evidence="1">
    <location>
        <begin position="143"/>
        <end position="163"/>
    </location>
</feature>
<feature type="transmembrane region" description="Helical" evidence="1">
    <location>
        <begin position="194"/>
        <end position="214"/>
    </location>
</feature>
<feature type="transmembrane region" description="Helical" evidence="1">
    <location>
        <begin position="234"/>
        <end position="254"/>
    </location>
</feature>
<name>COBS_RALPJ</name>
<evidence type="ECO:0000255" key="1">
    <source>
        <dbReference type="HAMAP-Rule" id="MF_00719"/>
    </source>
</evidence>
<keyword id="KW-0997">Cell inner membrane</keyword>
<keyword id="KW-1003">Cell membrane</keyword>
<keyword id="KW-0169">Cobalamin biosynthesis</keyword>
<keyword id="KW-0460">Magnesium</keyword>
<keyword id="KW-0472">Membrane</keyword>
<keyword id="KW-0808">Transferase</keyword>
<keyword id="KW-0812">Transmembrane</keyword>
<keyword id="KW-1133">Transmembrane helix</keyword>
<organism>
    <name type="scientific">Ralstonia pickettii (strain 12J)</name>
    <dbReference type="NCBI Taxonomy" id="402626"/>
    <lineage>
        <taxon>Bacteria</taxon>
        <taxon>Pseudomonadati</taxon>
        <taxon>Pseudomonadota</taxon>
        <taxon>Betaproteobacteria</taxon>
        <taxon>Burkholderiales</taxon>
        <taxon>Burkholderiaceae</taxon>
        <taxon>Ralstonia</taxon>
    </lineage>
</organism>
<proteinExistence type="inferred from homology"/>
<protein>
    <recommendedName>
        <fullName evidence="1">Adenosylcobinamide-GDP ribazoletransferase</fullName>
        <ecNumber evidence="1">2.7.8.26</ecNumber>
    </recommendedName>
    <alternativeName>
        <fullName evidence="1">Cobalamin synthase</fullName>
    </alternativeName>
    <alternativeName>
        <fullName evidence="1">Cobalamin-5'-phosphate synthase</fullName>
    </alternativeName>
</protein>
<reference key="1">
    <citation type="submission" date="2008-05" db="EMBL/GenBank/DDBJ databases">
        <title>Complete sequence of chromosome 1 of Ralstonia pickettii 12J.</title>
        <authorList>
            <person name="Lucas S."/>
            <person name="Copeland A."/>
            <person name="Lapidus A."/>
            <person name="Glavina del Rio T."/>
            <person name="Dalin E."/>
            <person name="Tice H."/>
            <person name="Bruce D."/>
            <person name="Goodwin L."/>
            <person name="Pitluck S."/>
            <person name="Meincke L."/>
            <person name="Brettin T."/>
            <person name="Detter J.C."/>
            <person name="Han C."/>
            <person name="Kuske C.R."/>
            <person name="Schmutz J."/>
            <person name="Larimer F."/>
            <person name="Land M."/>
            <person name="Hauser L."/>
            <person name="Kyrpides N."/>
            <person name="Mikhailova N."/>
            <person name="Marsh T."/>
            <person name="Richardson P."/>
        </authorList>
    </citation>
    <scope>NUCLEOTIDE SEQUENCE [LARGE SCALE GENOMIC DNA]</scope>
    <source>
        <strain>12J</strain>
    </source>
</reference>
<gene>
    <name evidence="1" type="primary">cobS</name>
    <name type="ordered locus">Rpic_2662</name>
</gene>